<keyword id="KW-0002">3D-structure</keyword>
<keyword id="KW-0025">Alternative splicing</keyword>
<keyword id="KW-0225">Disease variant</keyword>
<keyword id="KW-1015">Disulfide bond</keyword>
<keyword id="KW-0256">Endoplasmic reticulum</keyword>
<keyword id="KW-0393">Immunoglobulin domain</keyword>
<keyword id="KW-1267">Proteomics identification</keyword>
<keyword id="KW-1185">Reference proteome</keyword>
<keyword id="KW-0964">Secreted</keyword>
<keyword id="KW-0732">Signal</keyword>
<evidence type="ECO:0000250" key="1"/>
<evidence type="ECO:0000250" key="2">
    <source>
        <dbReference type="UniProtKB" id="P20764"/>
    </source>
</evidence>
<evidence type="ECO:0000255" key="3"/>
<evidence type="ECO:0000255" key="4">
    <source>
        <dbReference type="PROSITE-ProRule" id="PRU00114"/>
    </source>
</evidence>
<evidence type="ECO:0000269" key="5">
    <source>
    </source>
</evidence>
<evidence type="ECO:0000269" key="6">
    <source>
    </source>
</evidence>
<evidence type="ECO:0000269" key="7">
    <source>
    </source>
</evidence>
<evidence type="ECO:0000303" key="8">
    <source>
    </source>
</evidence>
<evidence type="ECO:0007829" key="9">
    <source>
        <dbReference type="PDB" id="2H3N"/>
    </source>
</evidence>
<evidence type="ECO:0007829" key="10">
    <source>
        <dbReference type="PDB" id="2LKQ"/>
    </source>
</evidence>
<feature type="signal peptide" evidence="3">
    <location>
        <begin position="1"/>
        <end position="37"/>
    </location>
</feature>
<feature type="chain" id="PRO_0000014777" description="Immunoglobulin lambda-like polypeptide 1">
    <location>
        <begin position="38"/>
        <end position="213"/>
    </location>
</feature>
<feature type="domain" description="Ig-like C1-type">
    <location>
        <begin position="114"/>
        <end position="208"/>
    </location>
</feature>
<feature type="region of interest" description="J region" evidence="1">
    <location>
        <begin position="97"/>
        <end position="108"/>
    </location>
</feature>
<feature type="region of interest" description="C region" evidence="1">
    <location>
        <begin position="109"/>
        <end position="213"/>
    </location>
</feature>
<feature type="disulfide bond" evidence="4 5">
    <location>
        <begin position="135"/>
        <end position="194"/>
    </location>
</feature>
<feature type="disulfide bond" description="Interchain (with a heavy chain)" evidence="4">
    <location>
        <position position="212"/>
    </location>
</feature>
<feature type="splice variant" id="VSP_042748" description="In isoform 2." evidence="8">
    <original>FLLQRGSWTGPRCWPRGFQSKHNSVTHVFGSGTQLTVLSQPKATPSVTLFPPSSEELQANKATLVCLMNDFYPGILTVTWKADGTPITQGVEMTTPSKQSNNKYAASSYLSLTPEQWRSRRSYSCQVMHEGSTVEKTVAPAECS</original>
    <variation>SAQGHPLGHSVPAVL</variation>
    <location>
        <begin position="70"/>
        <end position="213"/>
    </location>
</feature>
<feature type="sequence variant" id="VAR_034869" description="In AGM2; dbSNP:rs1064422." evidence="7">
    <original>P</original>
    <variation>L</variation>
    <location>
        <position position="142"/>
    </location>
</feature>
<feature type="sequence variant" id="VAR_059392" description="In dbSNP:rs8138122.">
    <original>R</original>
    <variation>H</variation>
    <location>
        <position position="189"/>
    </location>
</feature>
<feature type="turn" evidence="10">
    <location>
        <begin position="61"/>
        <end position="65"/>
    </location>
</feature>
<feature type="helix" evidence="10">
    <location>
        <begin position="66"/>
        <end position="70"/>
    </location>
</feature>
<feature type="helix" evidence="10">
    <location>
        <begin position="72"/>
        <end position="75"/>
    </location>
</feature>
<feature type="strand" evidence="9">
    <location>
        <begin position="102"/>
        <end position="108"/>
    </location>
</feature>
<feature type="strand" evidence="9">
    <location>
        <begin position="115"/>
        <end position="119"/>
    </location>
</feature>
<feature type="helix" evidence="9">
    <location>
        <begin position="123"/>
        <end position="126"/>
    </location>
</feature>
<feature type="turn" evidence="9">
    <location>
        <begin position="127"/>
        <end position="129"/>
    </location>
</feature>
<feature type="strand" evidence="9">
    <location>
        <begin position="131"/>
        <end position="143"/>
    </location>
</feature>
<feature type="strand" evidence="9">
    <location>
        <begin position="146"/>
        <end position="151"/>
    </location>
</feature>
<feature type="strand" evidence="9">
    <location>
        <begin position="158"/>
        <end position="162"/>
    </location>
</feature>
<feature type="strand" evidence="9">
    <location>
        <begin position="173"/>
        <end position="181"/>
    </location>
</feature>
<feature type="helix" evidence="9">
    <location>
        <begin position="183"/>
        <end position="188"/>
    </location>
</feature>
<feature type="strand" evidence="9">
    <location>
        <begin position="192"/>
        <end position="198"/>
    </location>
</feature>
<feature type="strand" evidence="9">
    <location>
        <begin position="201"/>
        <end position="207"/>
    </location>
</feature>
<protein>
    <recommendedName>
        <fullName>Immunoglobulin lambda-like polypeptide 1</fullName>
    </recommendedName>
    <alternativeName>
        <fullName>CD179 antigen-like family member B</fullName>
    </alternativeName>
    <alternativeName>
        <fullName>Ig lambda-5</fullName>
    </alternativeName>
    <alternativeName>
        <fullName>Immunoglobulin omega polypeptide</fullName>
    </alternativeName>
    <alternativeName>
        <fullName>Immunoglobulin-related protein 14.1</fullName>
    </alternativeName>
    <cdAntigenName>CD179b</cdAntigenName>
</protein>
<dbReference type="EMBL" id="M27749">
    <property type="protein sequence ID" value="AAA36100.1"/>
    <property type="molecule type" value="mRNA"/>
</dbReference>
<dbReference type="EMBL" id="M34513">
    <property type="protein sequence ID" value="AAA36096.1"/>
    <property type="molecule type" value="Genomic_DNA"/>
</dbReference>
<dbReference type="EMBL" id="M34511">
    <property type="protein sequence ID" value="AAA36096.1"/>
    <property type="status" value="JOINED"/>
    <property type="molecule type" value="Genomic_DNA"/>
</dbReference>
<dbReference type="EMBL" id="M34512">
    <property type="protein sequence ID" value="AAA36096.1"/>
    <property type="status" value="JOINED"/>
    <property type="molecule type" value="Genomic_DNA"/>
</dbReference>
<dbReference type="EMBL" id="AP000345">
    <property type="status" value="NOT_ANNOTATED_CDS"/>
    <property type="molecule type" value="Genomic_DNA"/>
</dbReference>
<dbReference type="EMBL" id="BC030239">
    <property type="protein sequence ID" value="AAH30239.2"/>
    <property type="molecule type" value="mRNA"/>
</dbReference>
<dbReference type="EMBL" id="BC012293">
    <property type="protein sequence ID" value="AAH12293.1"/>
    <property type="molecule type" value="mRNA"/>
</dbReference>
<dbReference type="EMBL" id="X03528">
    <property type="protein sequence ID" value="CAA27229.1"/>
    <property type="molecule type" value="Genomic_DNA"/>
</dbReference>
<dbReference type="EMBL" id="X03530">
    <property type="protein sequence ID" value="CAA27231.1"/>
    <property type="molecule type" value="Genomic_DNA"/>
</dbReference>
<dbReference type="CCDS" id="CCDS13809.1">
    <molecule id="P15814-1"/>
</dbReference>
<dbReference type="CCDS" id="CCDS13810.1">
    <molecule id="P15814-2"/>
</dbReference>
<dbReference type="PIR" id="A33911">
    <property type="entry name" value="A33911"/>
</dbReference>
<dbReference type="RefSeq" id="NP_064455.1">
    <molecule id="P15814-1"/>
    <property type="nucleotide sequence ID" value="NM_020070.4"/>
</dbReference>
<dbReference type="RefSeq" id="NP_690594.1">
    <molecule id="P15814-2"/>
    <property type="nucleotide sequence ID" value="NM_152855.3"/>
</dbReference>
<dbReference type="PDB" id="2H32">
    <property type="method" value="X-ray"/>
    <property type="resolution" value="2.70 A"/>
    <property type="chains" value="B=93-213"/>
</dbReference>
<dbReference type="PDB" id="2H3N">
    <property type="method" value="X-ray"/>
    <property type="resolution" value="2.30 A"/>
    <property type="chains" value="B/D=94-209"/>
</dbReference>
<dbReference type="PDB" id="2LKQ">
    <property type="method" value="NMR"/>
    <property type="chains" value="A=59-82"/>
</dbReference>
<dbReference type="PDBsum" id="2H32"/>
<dbReference type="PDBsum" id="2H3N"/>
<dbReference type="PDBsum" id="2LKQ"/>
<dbReference type="BMRB" id="P15814"/>
<dbReference type="SMR" id="P15814"/>
<dbReference type="BioGRID" id="109759">
    <property type="interactions" value="9"/>
</dbReference>
<dbReference type="CORUM" id="P15814"/>
<dbReference type="FunCoup" id="P15814">
    <property type="interactions" value="134"/>
</dbReference>
<dbReference type="IntAct" id="P15814">
    <property type="interactions" value="9"/>
</dbReference>
<dbReference type="MINT" id="P15814"/>
<dbReference type="STRING" id="9606.ENSP00000329312"/>
<dbReference type="DrugBank" id="DB09130">
    <property type="generic name" value="Copper"/>
</dbReference>
<dbReference type="GlyCosmos" id="P15814">
    <property type="glycosylation" value="2 sites, 2 glycans"/>
</dbReference>
<dbReference type="GlyGen" id="P15814">
    <property type="glycosylation" value="3 sites, 3 O-linked glycans (3 sites)"/>
</dbReference>
<dbReference type="iPTMnet" id="P15814"/>
<dbReference type="PhosphoSitePlus" id="P15814"/>
<dbReference type="BioMuta" id="IGLL1"/>
<dbReference type="DMDM" id="123944"/>
<dbReference type="MassIVE" id="P15814"/>
<dbReference type="PaxDb" id="9606-ENSP00000329312"/>
<dbReference type="PeptideAtlas" id="P15814"/>
<dbReference type="ProteomicsDB" id="53223">
    <molecule id="P15814-1"/>
</dbReference>
<dbReference type="ProteomicsDB" id="53224">
    <molecule id="P15814-2"/>
</dbReference>
<dbReference type="Antibodypedia" id="9342">
    <property type="antibodies" value="305 antibodies from 30 providers"/>
</dbReference>
<dbReference type="DNASU" id="3543"/>
<dbReference type="Ensembl" id="ENST00000249053.3">
    <molecule id="P15814-2"/>
    <property type="protein sequence ID" value="ENSP00000249053.3"/>
    <property type="gene ID" value="ENSG00000128322.7"/>
</dbReference>
<dbReference type="Ensembl" id="ENST00000330377.3">
    <molecule id="P15814-1"/>
    <property type="protein sequence ID" value="ENSP00000329312.2"/>
    <property type="gene ID" value="ENSG00000128322.7"/>
</dbReference>
<dbReference type="GeneID" id="3543"/>
<dbReference type="KEGG" id="hsa:3543"/>
<dbReference type="MANE-Select" id="ENST00000330377.3">
    <property type="protein sequence ID" value="ENSP00000329312.2"/>
    <property type="RefSeq nucleotide sequence ID" value="NM_020070.4"/>
    <property type="RefSeq protein sequence ID" value="NP_064455.1"/>
</dbReference>
<dbReference type="UCSC" id="uc002zxd.4">
    <molecule id="P15814-1"/>
    <property type="organism name" value="human"/>
</dbReference>
<dbReference type="AGR" id="HGNC:5870"/>
<dbReference type="CTD" id="3543"/>
<dbReference type="DisGeNET" id="3543"/>
<dbReference type="GeneCards" id="IGLL1"/>
<dbReference type="HGNC" id="HGNC:5870">
    <property type="gene designation" value="IGLL1"/>
</dbReference>
<dbReference type="HPA" id="ENSG00000128322">
    <property type="expression patterns" value="Group enriched (bone marrow, testis)"/>
</dbReference>
<dbReference type="MalaCards" id="IGLL1"/>
<dbReference type="MIM" id="146770">
    <property type="type" value="gene"/>
</dbReference>
<dbReference type="MIM" id="613500">
    <property type="type" value="phenotype"/>
</dbReference>
<dbReference type="neXtProt" id="NX_P15814"/>
<dbReference type="OpenTargets" id="ENSG00000128322"/>
<dbReference type="Orphanet" id="33110">
    <property type="disease" value="Autosomal non-syndromic agammaglobulinemia"/>
</dbReference>
<dbReference type="PharmGKB" id="PA29756"/>
<dbReference type="VEuPathDB" id="HostDB:ENSG00000128322"/>
<dbReference type="eggNOG" id="ENOG502SPNC">
    <property type="taxonomic scope" value="Eukaryota"/>
</dbReference>
<dbReference type="GeneTree" id="ENSGT00940000153307"/>
<dbReference type="HOGENOM" id="CLU_2526772_0_0_1"/>
<dbReference type="InParanoid" id="P15814"/>
<dbReference type="OMA" id="WGRFPLQ"/>
<dbReference type="OrthoDB" id="9049585at2759"/>
<dbReference type="PAN-GO" id="P15814">
    <property type="GO annotations" value="11 GO annotations based on evolutionary models"/>
</dbReference>
<dbReference type="PhylomeDB" id="P15814"/>
<dbReference type="TreeFam" id="TF335549"/>
<dbReference type="PathwayCommons" id="P15814"/>
<dbReference type="Reactome" id="R-HSA-202733">
    <property type="pathway name" value="Cell surface interactions at the vascular wall"/>
</dbReference>
<dbReference type="SignaLink" id="P15814"/>
<dbReference type="BioGRID-ORCS" id="3543">
    <property type="hits" value="29 hits in 1149 CRISPR screens"/>
</dbReference>
<dbReference type="ChiTaRS" id="IGLL1">
    <property type="organism name" value="human"/>
</dbReference>
<dbReference type="EvolutionaryTrace" id="P15814"/>
<dbReference type="GeneWiki" id="IGLL1"/>
<dbReference type="GenomeRNAi" id="3543"/>
<dbReference type="Pharos" id="P15814">
    <property type="development level" value="Tbio"/>
</dbReference>
<dbReference type="PRO" id="PR:P15814"/>
<dbReference type="Proteomes" id="UP000005640">
    <property type="component" value="Chromosome 22"/>
</dbReference>
<dbReference type="RNAct" id="P15814">
    <property type="molecule type" value="protein"/>
</dbReference>
<dbReference type="Bgee" id="ENSG00000128322">
    <property type="expression patterns" value="Expressed in bone marrow and 102 other cell types or tissues"/>
</dbReference>
<dbReference type="ExpressionAtlas" id="P15814">
    <property type="expression patterns" value="baseline and differential"/>
</dbReference>
<dbReference type="GO" id="GO:0005783">
    <property type="term" value="C:endoplasmic reticulum"/>
    <property type="evidence" value="ECO:0007669"/>
    <property type="project" value="UniProtKB-SubCell"/>
</dbReference>
<dbReference type="GO" id="GO:0005576">
    <property type="term" value="C:extracellular region"/>
    <property type="evidence" value="ECO:0000304"/>
    <property type="project" value="Reactome"/>
</dbReference>
<dbReference type="GO" id="GO:0071735">
    <property type="term" value="C:IgG immunoglobulin complex"/>
    <property type="evidence" value="ECO:0000318"/>
    <property type="project" value="GO_Central"/>
</dbReference>
<dbReference type="GO" id="GO:0016020">
    <property type="term" value="C:membrane"/>
    <property type="evidence" value="ECO:0000303"/>
    <property type="project" value="UniProtKB"/>
</dbReference>
<dbReference type="GO" id="GO:0003823">
    <property type="term" value="F:antigen binding"/>
    <property type="evidence" value="ECO:0000318"/>
    <property type="project" value="GO_Central"/>
</dbReference>
<dbReference type="GO" id="GO:0006955">
    <property type="term" value="P:immune response"/>
    <property type="evidence" value="ECO:0000303"/>
    <property type="project" value="UniProtKB"/>
</dbReference>
<dbReference type="GO" id="GO:0016064">
    <property type="term" value="P:immunoglobulin mediated immune response"/>
    <property type="evidence" value="ECO:0000318"/>
    <property type="project" value="GO_Central"/>
</dbReference>
<dbReference type="CDD" id="cd07699">
    <property type="entry name" value="IgC1_L"/>
    <property type="match status" value="1"/>
</dbReference>
<dbReference type="FunFam" id="2.60.40.10:FF:000283">
    <property type="entry name" value="Immunoglobulin kappa constant"/>
    <property type="match status" value="1"/>
</dbReference>
<dbReference type="Gene3D" id="2.60.40.10">
    <property type="entry name" value="Immunoglobulins"/>
    <property type="match status" value="1"/>
</dbReference>
<dbReference type="InterPro" id="IPR007110">
    <property type="entry name" value="Ig-like_dom"/>
</dbReference>
<dbReference type="InterPro" id="IPR036179">
    <property type="entry name" value="Ig-like_dom_sf"/>
</dbReference>
<dbReference type="InterPro" id="IPR013783">
    <property type="entry name" value="Ig-like_fold"/>
</dbReference>
<dbReference type="InterPro" id="IPR003006">
    <property type="entry name" value="Ig/MHC_CS"/>
</dbReference>
<dbReference type="InterPro" id="IPR003597">
    <property type="entry name" value="Ig_C1-set"/>
</dbReference>
<dbReference type="InterPro" id="IPR050160">
    <property type="entry name" value="MHC/Immunoglobulin"/>
</dbReference>
<dbReference type="PANTHER" id="PTHR19944:SF98">
    <property type="entry name" value="IG-LIKE DOMAIN-CONTAINING PROTEIN"/>
    <property type="match status" value="1"/>
</dbReference>
<dbReference type="PANTHER" id="PTHR19944">
    <property type="entry name" value="MHC CLASS II-RELATED"/>
    <property type="match status" value="1"/>
</dbReference>
<dbReference type="Pfam" id="PF07654">
    <property type="entry name" value="C1-set"/>
    <property type="match status" value="1"/>
</dbReference>
<dbReference type="SMART" id="SM00407">
    <property type="entry name" value="IGc1"/>
    <property type="match status" value="1"/>
</dbReference>
<dbReference type="SUPFAM" id="SSF48726">
    <property type="entry name" value="Immunoglobulin"/>
    <property type="match status" value="1"/>
</dbReference>
<dbReference type="PROSITE" id="PS50835">
    <property type="entry name" value="IG_LIKE"/>
    <property type="match status" value="1"/>
</dbReference>
<dbReference type="PROSITE" id="PS00290">
    <property type="entry name" value="IG_MHC"/>
    <property type="match status" value="1"/>
</dbReference>
<organism>
    <name type="scientific">Homo sapiens</name>
    <name type="common">Human</name>
    <dbReference type="NCBI Taxonomy" id="9606"/>
    <lineage>
        <taxon>Eukaryota</taxon>
        <taxon>Metazoa</taxon>
        <taxon>Chordata</taxon>
        <taxon>Craniata</taxon>
        <taxon>Vertebrata</taxon>
        <taxon>Euteleostomi</taxon>
        <taxon>Mammalia</taxon>
        <taxon>Eutheria</taxon>
        <taxon>Euarchontoglires</taxon>
        <taxon>Primates</taxon>
        <taxon>Haplorrhini</taxon>
        <taxon>Catarrhini</taxon>
        <taxon>Hominidae</taxon>
        <taxon>Homo</taxon>
    </lineage>
</organism>
<accession>P15814</accession>
<accession>Q0P681</accession>
<name>IGLL1_HUMAN</name>
<reference key="1">
    <citation type="journal article" date="1989" name="Proc. Natl. Acad. Sci. U.S.A.">
        <title>Immunoglobulin lambda light-chain-related genes 14.1 and 16.1 are expressed in pre-B cells and may encode the human immunoglobulin omega light-chain protein.</title>
        <authorList>
            <person name="Hollis G.F."/>
            <person name="Evans R.J."/>
            <person name="Stafford-Hollis J.M."/>
            <person name="Korsmeyer S.J."/>
            <person name="McKearn J.P."/>
        </authorList>
    </citation>
    <scope>NUCLEOTIDE SEQUENCE [MRNA] (ISOFORM 1)</scope>
</reference>
<reference key="2">
    <citation type="journal article" date="1991" name="J. Exp. Med.">
        <title>Genomic structure of the human Ig lambda 1 gene suggests that it may be expressed as an Ig lambda 14.1-like protein or as a canonical B cell Ig lambda light chain: implications for Ig lambda gene evolution.</title>
        <authorList>
            <person name="Evans R.J."/>
            <person name="Hollis G.F."/>
        </authorList>
    </citation>
    <scope>NUCLEOTIDE SEQUENCE [GENOMIC DNA]</scope>
    <source>
        <tissue>Lymphoid tissue</tissue>
    </source>
</reference>
<reference key="3">
    <citation type="journal article" date="1999" name="Nature">
        <title>The DNA sequence of human chromosome 22.</title>
        <authorList>
            <person name="Dunham I."/>
            <person name="Hunt A.R."/>
            <person name="Collins J.E."/>
            <person name="Bruskiewich R."/>
            <person name="Beare D.M."/>
            <person name="Clamp M."/>
            <person name="Smink L.J."/>
            <person name="Ainscough R."/>
            <person name="Almeida J.P."/>
            <person name="Babbage A.K."/>
            <person name="Bagguley C."/>
            <person name="Bailey J."/>
            <person name="Barlow K.F."/>
            <person name="Bates K.N."/>
            <person name="Beasley O.P."/>
            <person name="Bird C.P."/>
            <person name="Blakey S.E."/>
            <person name="Bridgeman A.M."/>
            <person name="Buck D."/>
            <person name="Burgess J."/>
            <person name="Burrill W.D."/>
            <person name="Burton J."/>
            <person name="Carder C."/>
            <person name="Carter N.P."/>
            <person name="Chen Y."/>
            <person name="Clark G."/>
            <person name="Clegg S.M."/>
            <person name="Cobley V.E."/>
            <person name="Cole C.G."/>
            <person name="Collier R.E."/>
            <person name="Connor R."/>
            <person name="Conroy D."/>
            <person name="Corby N.R."/>
            <person name="Coville G.J."/>
            <person name="Cox A.V."/>
            <person name="Davis J."/>
            <person name="Dawson E."/>
            <person name="Dhami P.D."/>
            <person name="Dockree C."/>
            <person name="Dodsworth S.J."/>
            <person name="Durbin R.M."/>
            <person name="Ellington A.G."/>
            <person name="Evans K.L."/>
            <person name="Fey J.M."/>
            <person name="Fleming K."/>
            <person name="French L."/>
            <person name="Garner A.A."/>
            <person name="Gilbert J.G.R."/>
            <person name="Goward M.E."/>
            <person name="Grafham D.V."/>
            <person name="Griffiths M.N.D."/>
            <person name="Hall C."/>
            <person name="Hall R.E."/>
            <person name="Hall-Tamlyn G."/>
            <person name="Heathcott R.W."/>
            <person name="Ho S."/>
            <person name="Holmes S."/>
            <person name="Hunt S.E."/>
            <person name="Jones M.C."/>
            <person name="Kershaw J."/>
            <person name="Kimberley A.M."/>
            <person name="King A."/>
            <person name="Laird G.K."/>
            <person name="Langford C.F."/>
            <person name="Leversha M.A."/>
            <person name="Lloyd C."/>
            <person name="Lloyd D.M."/>
            <person name="Martyn I.D."/>
            <person name="Mashreghi-Mohammadi M."/>
            <person name="Matthews L.H."/>
            <person name="Mccann O.T."/>
            <person name="Mcclay J."/>
            <person name="Mclaren S."/>
            <person name="McMurray A.A."/>
            <person name="Milne S.A."/>
            <person name="Mortimore B.J."/>
            <person name="Odell C.N."/>
            <person name="Pavitt R."/>
            <person name="Pearce A.V."/>
            <person name="Pearson D."/>
            <person name="Phillimore B.J.C.T."/>
            <person name="Phillips S.H."/>
            <person name="Plumb R.W."/>
            <person name="Ramsay H."/>
            <person name="Ramsey Y."/>
            <person name="Rogers L."/>
            <person name="Ross M.T."/>
            <person name="Scott C.E."/>
            <person name="Sehra H.K."/>
            <person name="Skuce C.D."/>
            <person name="Smalley S."/>
            <person name="Smith M.L."/>
            <person name="Soderlund C."/>
            <person name="Spragon L."/>
            <person name="Steward C.A."/>
            <person name="Sulston J.E."/>
            <person name="Swann R.M."/>
            <person name="Vaudin M."/>
            <person name="Wall M."/>
            <person name="Wallis J.M."/>
            <person name="Whiteley M.N."/>
            <person name="Willey D.L."/>
            <person name="Williams L."/>
            <person name="Williams S.A."/>
            <person name="Williamson H."/>
            <person name="Wilmer T.E."/>
            <person name="Wilming L."/>
            <person name="Wright C.L."/>
            <person name="Hubbard T."/>
            <person name="Bentley D.R."/>
            <person name="Beck S."/>
            <person name="Rogers J."/>
            <person name="Shimizu N."/>
            <person name="Minoshima S."/>
            <person name="Kawasaki K."/>
            <person name="Sasaki T."/>
            <person name="Asakawa S."/>
            <person name="Kudoh J."/>
            <person name="Shintani A."/>
            <person name="Shibuya K."/>
            <person name="Yoshizaki Y."/>
            <person name="Aoki N."/>
            <person name="Mitsuyama S."/>
            <person name="Roe B.A."/>
            <person name="Chen F."/>
            <person name="Chu L."/>
            <person name="Crabtree J."/>
            <person name="Deschamps S."/>
            <person name="Do A."/>
            <person name="Do T."/>
            <person name="Dorman A."/>
            <person name="Fang F."/>
            <person name="Fu Y."/>
            <person name="Hu P."/>
            <person name="Hua A."/>
            <person name="Kenton S."/>
            <person name="Lai H."/>
            <person name="Lao H.I."/>
            <person name="Lewis J."/>
            <person name="Lewis S."/>
            <person name="Lin S.-P."/>
            <person name="Loh P."/>
            <person name="Malaj E."/>
            <person name="Nguyen T."/>
            <person name="Pan H."/>
            <person name="Phan S."/>
            <person name="Qi S."/>
            <person name="Qian Y."/>
            <person name="Ray L."/>
            <person name="Ren Q."/>
            <person name="Shaull S."/>
            <person name="Sloan D."/>
            <person name="Song L."/>
            <person name="Wang Q."/>
            <person name="Wang Y."/>
            <person name="Wang Z."/>
            <person name="White J."/>
            <person name="Willingham D."/>
            <person name="Wu H."/>
            <person name="Yao Z."/>
            <person name="Zhan M."/>
            <person name="Zhang G."/>
            <person name="Chissoe S."/>
            <person name="Murray J."/>
            <person name="Miller N."/>
            <person name="Minx P."/>
            <person name="Fulton R."/>
            <person name="Johnson D."/>
            <person name="Bemis G."/>
            <person name="Bentley D."/>
            <person name="Bradshaw H."/>
            <person name="Bourne S."/>
            <person name="Cordes M."/>
            <person name="Du Z."/>
            <person name="Fulton L."/>
            <person name="Goela D."/>
            <person name="Graves T."/>
            <person name="Hawkins J."/>
            <person name="Hinds K."/>
            <person name="Kemp K."/>
            <person name="Latreille P."/>
            <person name="Layman D."/>
            <person name="Ozersky P."/>
            <person name="Rohlfing T."/>
            <person name="Scheet P."/>
            <person name="Walker C."/>
            <person name="Wamsley A."/>
            <person name="Wohldmann P."/>
            <person name="Pepin K."/>
            <person name="Nelson J."/>
            <person name="Korf I."/>
            <person name="Bedell J.A."/>
            <person name="Hillier L.W."/>
            <person name="Mardis E."/>
            <person name="Waterston R."/>
            <person name="Wilson R."/>
            <person name="Emanuel B.S."/>
            <person name="Shaikh T."/>
            <person name="Kurahashi H."/>
            <person name="Saitta S."/>
            <person name="Budarf M.L."/>
            <person name="McDermid H.E."/>
            <person name="Johnson A."/>
            <person name="Wong A.C.C."/>
            <person name="Morrow B.E."/>
            <person name="Edelmann L."/>
            <person name="Kim U.J."/>
            <person name="Shizuya H."/>
            <person name="Simon M.I."/>
            <person name="Dumanski J.P."/>
            <person name="Peyrard M."/>
            <person name="Kedra D."/>
            <person name="Seroussi E."/>
            <person name="Fransson I."/>
            <person name="Tapia I."/>
            <person name="Bruder C.E."/>
            <person name="O'Brien K.P."/>
            <person name="Wilkinson P."/>
            <person name="Bodenteich A."/>
            <person name="Hartman K."/>
            <person name="Hu X."/>
            <person name="Khan A.S."/>
            <person name="Lane L."/>
            <person name="Tilahun Y."/>
            <person name="Wright H."/>
        </authorList>
    </citation>
    <scope>NUCLEOTIDE SEQUENCE [LARGE SCALE GENOMIC DNA]</scope>
</reference>
<reference key="4">
    <citation type="journal article" date="2004" name="Genome Res.">
        <title>The status, quality, and expansion of the NIH full-length cDNA project: the Mammalian Gene Collection (MGC).</title>
        <authorList>
            <consortium name="The MGC Project Team"/>
        </authorList>
    </citation>
    <scope>NUCLEOTIDE SEQUENCE [LARGE SCALE MRNA] (ISOFORMS 1 AND 2)</scope>
    <source>
        <tissue>Testis</tissue>
    </source>
</reference>
<reference key="5">
    <citation type="journal article" date="1990" name="Int. Immunol.">
        <title>The immunoglobulin lambda-like gene cluster (14.1, 16.1 and F lambda 1) contains gene(s) selectively expressed in pre-B cells and is the human counterpart of the mouse lambda 5 gene.</title>
        <authorList>
            <person name="Schiff C."/>
            <person name="Bensmana M."/>
            <person name="Guglielmi P."/>
            <person name="Milili M."/>
            <person name="Lefranc M.-P."/>
            <person name="Fougereau M."/>
        </authorList>
    </citation>
    <scope>NUCLEOTIDE SEQUENCE [GENOMIC DNA] OF 1-193</scope>
    <scope>TISSUE SPECIFICITY</scope>
</reference>
<reference key="6">
    <citation type="journal article" date="1986" name="J. Exp. Med.">
        <title>Identification of three new Ig lambda-like genes in man.</title>
        <authorList>
            <person name="Chang H."/>
            <person name="Dmitrovsky E."/>
            <person name="Hieter P.A."/>
            <person name="Mitchell K."/>
            <person name="Leder P."/>
            <person name="Turoczi L."/>
            <person name="Kirsch I.R."/>
            <person name="Hollis G.F."/>
        </authorList>
    </citation>
    <scope>NUCLEOTIDE SEQUENCE [GENOMIC DNA] OF 95-213</scope>
</reference>
<reference key="7">
    <citation type="journal article" date="1998" name="J. Exp. Med.">
        <title>Mutations in the human lambda5/14.1 gene result in B cell deficiency and agammaglobulinemia.</title>
        <authorList>
            <person name="Minegishi Y."/>
            <person name="Coustan-Smith E."/>
            <person name="Wang Y.H."/>
            <person name="Cooper M.D."/>
            <person name="Campana D."/>
            <person name="Conley M.E."/>
        </authorList>
    </citation>
    <scope>FUNCTION</scope>
    <scope>SUBCELLULAR LOCATION</scope>
    <scope>VARIANT AGM2 LEU-142</scope>
</reference>
<reference key="8">
    <citation type="journal article" date="2007" name="Science">
        <title>Structural insight into pre-B cell receptor function.</title>
        <authorList>
            <person name="Bankovich A.J."/>
            <person name="Raunser S."/>
            <person name="Juo Z.S."/>
            <person name="Walz T."/>
            <person name="Davis M.M."/>
            <person name="Garcia K.C."/>
        </authorList>
    </citation>
    <scope>X-RAY CRYSTALLOGRAPHY (2.3 ANGSTROMS) OF 93-209 IN COMPLEX WITH VPREB1</scope>
    <scope>SUBUNIT</scope>
    <scope>DISULFIDE BOND</scope>
</reference>
<sequence length="213" mass="22963">MRPGTGQGGLEAPGEPGPNLRQRWPLLLLGLAVVTHGLLRPTAASQSRALGPGAPGGSSRSSLRSRWGRFLLQRGSWTGPRCWPRGFQSKHNSVTHVFGSGTQLTVLSQPKATPSVTLFPPSSEELQANKATLVCLMNDFYPGILTVTWKADGTPITQGVEMTTPSKQSNNKYAASSYLSLTPEQWRSRRSYSCQVMHEGSTVEKTVAPAECS</sequence>
<gene>
    <name type="primary">IGLL1</name>
    <name type="synonym">IGL1</name>
</gene>
<proteinExistence type="evidence at protein level"/>
<comment type="function">
    <text evidence="7">Critical for B-cell development.</text>
</comment>
<comment type="subunit">
    <text evidence="2 5">Associates non-covalently with VPREB1 (PubMed:17431183). Interacts with SYNV1/HRD1 (via N-terminus); this interaction leads to increased IGLL1 ubiquitination and degradation in pre-B cells, possibly through a lysosomal, not proteasomal, pathway (By similarity).</text>
</comment>
<comment type="interaction">
    <interactant intactId="EBI-1222221">
        <id>P15814</id>
    </interactant>
    <interactant intactId="EBI-14240149">
        <id>B3EWG3</id>
        <label>FAM25A</label>
    </interactant>
    <organismsDiffer>false</organismsDiffer>
    <experiments>3</experiments>
</comment>
<comment type="interaction">
    <interactant intactId="EBI-1222221">
        <id>P15814</id>
    </interactant>
    <interactant intactId="EBI-947187">
        <id>Q9UHD9</id>
        <label>UBQLN2</label>
    </interactant>
    <organismsDiffer>false</organismsDiffer>
    <experiments>3</experiments>
</comment>
<comment type="interaction">
    <interactant intactId="EBI-1222221">
        <id>P15814</id>
    </interactant>
    <interactant intactId="EBI-26585631">
        <id>Q2GHU2</id>
        <label>ECH_0166</label>
    </interactant>
    <organismsDiffer>true</organismsDiffer>
    <experiments>2</experiments>
</comment>
<comment type="subcellular location">
    <subcellularLocation>
        <location evidence="2">Endoplasmic reticulum</location>
    </subcellularLocation>
    <subcellularLocation>
        <location evidence="7">Secreted</location>
    </subcellularLocation>
    <text evidence="2">In pre-B cells, localizes predominantly to the endoplasmic reticulum.</text>
</comment>
<comment type="alternative products">
    <event type="alternative splicing"/>
    <isoform>
        <id>P15814-1</id>
        <name>1</name>
        <sequence type="displayed"/>
    </isoform>
    <isoform>
        <id>P15814-2</id>
        <name>2</name>
        <sequence type="described" ref="VSP_042748"/>
    </isoform>
</comment>
<comment type="tissue specificity">
    <text evidence="6">Expressed only in pre-B-cells and a special B-cell line (which is surface Ig negative).</text>
</comment>
<comment type="disease" evidence="7">
    <disease id="DI-02888">
        <name>Agammaglobulinemia 2, autosomal recessive</name>
        <acronym>AGM2</acronym>
        <description>A primary immunodeficiency characterized by profoundly low or absent serum antibodies and low or absent circulating B cells due to an early block of B-cell development. Affected individuals develop severe infections in the first years of life.</description>
        <dbReference type="MIM" id="613500"/>
    </disease>
    <text>The disease is caused by variants affecting the gene represented in this entry.</text>
</comment>
<comment type="online information" name="IGLL1base">
    <link uri="https://databases.lovd.nl/shared/genes/IGLL1"/>
    <text>IGLL1 mutation db</text>
</comment>
<comment type="online information" name="Wikipedia">
    <link uri="https://en.wikipedia.org/wiki/IGLL1"/>
    <text>IGLL1</text>
</comment>